<reference key="1">
    <citation type="journal article" date="2001" name="Lancet">
        <title>Whole genome sequencing of meticillin-resistant Staphylococcus aureus.</title>
        <authorList>
            <person name="Kuroda M."/>
            <person name="Ohta T."/>
            <person name="Uchiyama I."/>
            <person name="Baba T."/>
            <person name="Yuzawa H."/>
            <person name="Kobayashi I."/>
            <person name="Cui L."/>
            <person name="Oguchi A."/>
            <person name="Aoki K."/>
            <person name="Nagai Y."/>
            <person name="Lian J.-Q."/>
            <person name="Ito T."/>
            <person name="Kanamori M."/>
            <person name="Matsumaru H."/>
            <person name="Maruyama A."/>
            <person name="Murakami H."/>
            <person name="Hosoyama A."/>
            <person name="Mizutani-Ui Y."/>
            <person name="Takahashi N.K."/>
            <person name="Sawano T."/>
            <person name="Inoue R."/>
            <person name="Kaito C."/>
            <person name="Sekimizu K."/>
            <person name="Hirakawa H."/>
            <person name="Kuhara S."/>
            <person name="Goto S."/>
            <person name="Yabuzaki J."/>
            <person name="Kanehisa M."/>
            <person name="Yamashita A."/>
            <person name="Oshima K."/>
            <person name="Furuya K."/>
            <person name="Yoshino C."/>
            <person name="Shiba T."/>
            <person name="Hattori M."/>
            <person name="Ogasawara N."/>
            <person name="Hayashi H."/>
            <person name="Hiramatsu K."/>
        </authorList>
    </citation>
    <scope>NUCLEOTIDE SEQUENCE [LARGE SCALE GENOMIC DNA]</scope>
    <source>
        <strain>N315</strain>
    </source>
</reference>
<reference key="2">
    <citation type="submission" date="2007-10" db="UniProtKB">
        <title>Shotgun proteomic analysis of total and membrane protein extracts of S. aureus strain N315.</title>
        <authorList>
            <person name="Vaezzadeh A.R."/>
            <person name="Deshusses J."/>
            <person name="Lescuyer P."/>
            <person name="Hochstrasser D.F."/>
        </authorList>
    </citation>
    <scope>IDENTIFICATION BY MASS SPECTROMETRY [LARGE SCALE ANALYSIS]</scope>
    <source>
        <strain>N315</strain>
    </source>
</reference>
<sequence length="192" mass="21014">MNIPNQITVFRVVLIPVFILFALVDFGFGNVSFLGGYEIRIELLISGFIFILASLSDFVDGYLARKWNLVTNMGKFLDPLADKLLVASALIVLVQLGLTNSVVAIIIIAREFAVTGLRLLQIEQGFVSAAGQLGKIKTAVTMVAITWLLLGDPLATLIGLSLGQILLYIGVIFTILSGIEYFYKGRDVFKQK</sequence>
<dbReference type="EC" id="2.7.8.5"/>
<dbReference type="EMBL" id="BA000018">
    <property type="protein sequence ID" value="BAB42378.1"/>
    <property type="molecule type" value="Genomic_DNA"/>
</dbReference>
<dbReference type="PIR" id="F89902">
    <property type="entry name" value="F89902"/>
</dbReference>
<dbReference type="RefSeq" id="WP_001025093.1">
    <property type="nucleotide sequence ID" value="NC_002745.2"/>
</dbReference>
<dbReference type="PDB" id="7DRJ">
    <property type="method" value="X-ray"/>
    <property type="resolution" value="2.50 A"/>
    <property type="chains" value="A/B=1-192"/>
</dbReference>
<dbReference type="PDB" id="7DRK">
    <property type="method" value="X-ray"/>
    <property type="resolution" value="3.00 A"/>
    <property type="chains" value="A/B=1-192"/>
</dbReference>
<dbReference type="PDBsum" id="7DRJ"/>
<dbReference type="PDBsum" id="7DRK"/>
<dbReference type="SMR" id="P63756"/>
<dbReference type="EnsemblBacteria" id="BAB42378">
    <property type="protein sequence ID" value="BAB42378"/>
    <property type="gene ID" value="BAB42378"/>
</dbReference>
<dbReference type="KEGG" id="sau:SA1126"/>
<dbReference type="HOGENOM" id="CLU_051314_2_3_9"/>
<dbReference type="UniPathway" id="UPA00084">
    <property type="reaction ID" value="UER00503"/>
</dbReference>
<dbReference type="GO" id="GO:0005886">
    <property type="term" value="C:plasma membrane"/>
    <property type="evidence" value="ECO:0007669"/>
    <property type="project" value="UniProtKB-SubCell"/>
</dbReference>
<dbReference type="GO" id="GO:0008444">
    <property type="term" value="F:CDP-diacylglycerol-glycerol-3-phosphate 3-phosphatidyltransferase activity"/>
    <property type="evidence" value="ECO:0007669"/>
    <property type="project" value="UniProtKB-EC"/>
</dbReference>
<dbReference type="GO" id="GO:0006655">
    <property type="term" value="P:phosphatidylglycerol biosynthetic process"/>
    <property type="evidence" value="ECO:0007669"/>
    <property type="project" value="UniProtKB-UniPathway"/>
</dbReference>
<dbReference type="FunFam" id="1.20.120.1760:FF:000004">
    <property type="entry name" value="CDP-diacylglycerol--glycerol-3-phosphate 3-phosphatidyltransferase"/>
    <property type="match status" value="1"/>
</dbReference>
<dbReference type="Gene3D" id="1.20.120.1760">
    <property type="match status" value="1"/>
</dbReference>
<dbReference type="InterPro" id="IPR050324">
    <property type="entry name" value="CDP-alcohol_PTase-I"/>
</dbReference>
<dbReference type="InterPro" id="IPR000462">
    <property type="entry name" value="CDP-OH_P_trans"/>
</dbReference>
<dbReference type="InterPro" id="IPR043130">
    <property type="entry name" value="CDP-OH_PTrfase_TM_dom"/>
</dbReference>
<dbReference type="InterPro" id="IPR048254">
    <property type="entry name" value="CDP_ALCOHOL_P_TRANSF_CS"/>
</dbReference>
<dbReference type="InterPro" id="IPR004570">
    <property type="entry name" value="Phosphatidylglycerol_P_synth"/>
</dbReference>
<dbReference type="NCBIfam" id="TIGR00560">
    <property type="entry name" value="pgsA"/>
    <property type="match status" value="1"/>
</dbReference>
<dbReference type="PANTHER" id="PTHR14269:SF62">
    <property type="entry name" value="CDP-DIACYLGLYCEROL--GLYCEROL-3-PHOSPHATE 3-PHOSPHATIDYLTRANSFERASE 1, CHLOROPLASTIC"/>
    <property type="match status" value="1"/>
</dbReference>
<dbReference type="PANTHER" id="PTHR14269">
    <property type="entry name" value="CDP-DIACYLGLYCEROL--GLYCEROL-3-PHOSPHATE 3-PHOSPHATIDYLTRANSFERASE-RELATED"/>
    <property type="match status" value="1"/>
</dbReference>
<dbReference type="Pfam" id="PF01066">
    <property type="entry name" value="CDP-OH_P_transf"/>
    <property type="match status" value="1"/>
</dbReference>
<dbReference type="PIRSF" id="PIRSF000847">
    <property type="entry name" value="Phos_ph_gly_syn"/>
    <property type="match status" value="1"/>
</dbReference>
<dbReference type="PROSITE" id="PS00379">
    <property type="entry name" value="CDP_ALCOHOL_P_TRANSF"/>
    <property type="match status" value="1"/>
</dbReference>
<proteinExistence type="evidence at protein level"/>
<accession>P63756</accession>
<accession>Q99UI9</accession>
<gene>
    <name type="primary">pgsA</name>
    <name type="ordered locus">SA1126</name>
</gene>
<name>PGSA_STAAN</name>
<feature type="chain" id="PRO_0000056786" description="CDP-diacylglycerol--glycerol-3-phosphate 3-phosphatidyltransferase">
    <location>
        <begin position="1"/>
        <end position="192"/>
    </location>
</feature>
<feature type="transmembrane region" description="Helical" evidence="2">
    <location>
        <begin position="7"/>
        <end position="29"/>
    </location>
</feature>
<feature type="transmembrane region" description="Helical" evidence="2">
    <location>
        <begin position="44"/>
        <end position="63"/>
    </location>
</feature>
<feature type="transmembrane region" description="Helical" evidence="2">
    <location>
        <begin position="84"/>
        <end position="106"/>
    </location>
</feature>
<feature type="transmembrane region" description="Helical" evidence="2">
    <location>
        <begin position="129"/>
        <end position="151"/>
    </location>
</feature>
<feature type="transmembrane region" description="Helical" evidence="2">
    <location>
        <begin position="157"/>
        <end position="179"/>
    </location>
</feature>
<feature type="helix" evidence="4">
    <location>
        <begin position="3"/>
        <end position="23"/>
    </location>
</feature>
<feature type="strand" evidence="4">
    <location>
        <begin position="30"/>
        <end position="32"/>
    </location>
</feature>
<feature type="strand" evidence="5">
    <location>
        <begin position="33"/>
        <end position="35"/>
    </location>
</feature>
<feature type="strand" evidence="4">
    <location>
        <begin position="38"/>
        <end position="40"/>
    </location>
</feature>
<feature type="helix" evidence="4">
    <location>
        <begin position="41"/>
        <end position="55"/>
    </location>
</feature>
<feature type="helix" evidence="4">
    <location>
        <begin position="59"/>
        <end position="66"/>
    </location>
</feature>
<feature type="helix" evidence="4">
    <location>
        <begin position="72"/>
        <end position="95"/>
    </location>
</feature>
<feature type="helix" evidence="4">
    <location>
        <begin position="101"/>
        <end position="123"/>
    </location>
</feature>
<feature type="helix" evidence="4">
    <location>
        <begin position="132"/>
        <end position="149"/>
    </location>
</feature>
<feature type="helix" evidence="4">
    <location>
        <begin position="155"/>
        <end position="158"/>
    </location>
</feature>
<feature type="helix" evidence="4">
    <location>
        <begin position="162"/>
        <end position="184"/>
    </location>
</feature>
<keyword id="KW-0002">3D-structure</keyword>
<keyword id="KW-1003">Cell membrane</keyword>
<keyword id="KW-0444">Lipid biosynthesis</keyword>
<keyword id="KW-0443">Lipid metabolism</keyword>
<keyword id="KW-0472">Membrane</keyword>
<keyword id="KW-0594">Phospholipid biosynthesis</keyword>
<keyword id="KW-1208">Phospholipid metabolism</keyword>
<keyword id="KW-0808">Transferase</keyword>
<keyword id="KW-0812">Transmembrane</keyword>
<keyword id="KW-1133">Transmembrane helix</keyword>
<protein>
    <recommendedName>
        <fullName>CDP-diacylglycerol--glycerol-3-phosphate 3-phosphatidyltransferase</fullName>
        <ecNumber>2.7.8.5</ecNumber>
    </recommendedName>
    <alternativeName>
        <fullName>Phosphatidylglycerophosphate synthase</fullName>
        <shortName>PGP synthase</shortName>
    </alternativeName>
</protein>
<comment type="function">
    <text evidence="1">This protein catalyzes the committed step to the synthesis of the acidic phospholipids.</text>
</comment>
<comment type="catalytic activity">
    <reaction>
        <text>a CDP-1,2-diacyl-sn-glycerol + sn-glycerol 3-phosphate = a 1,2-diacyl-sn-glycero-3-phospho-(1'-sn-glycero-3'-phosphate) + CMP + H(+)</text>
        <dbReference type="Rhea" id="RHEA:12593"/>
        <dbReference type="ChEBI" id="CHEBI:15378"/>
        <dbReference type="ChEBI" id="CHEBI:57597"/>
        <dbReference type="ChEBI" id="CHEBI:58332"/>
        <dbReference type="ChEBI" id="CHEBI:60110"/>
        <dbReference type="ChEBI" id="CHEBI:60377"/>
        <dbReference type="EC" id="2.7.8.5"/>
    </reaction>
</comment>
<comment type="pathway">
    <text>Phospholipid metabolism; phosphatidylglycerol biosynthesis; phosphatidylglycerol from CDP-diacylglycerol: step 1/2.</text>
</comment>
<comment type="subcellular location">
    <subcellularLocation>
        <location evidence="1">Cell membrane</location>
        <topology evidence="1">Multi-pass membrane protein</topology>
    </subcellularLocation>
</comment>
<comment type="similarity">
    <text evidence="3">Belongs to the CDP-alcohol phosphatidyltransferase class-I family.</text>
</comment>
<evidence type="ECO:0000250" key="1"/>
<evidence type="ECO:0000255" key="2"/>
<evidence type="ECO:0000305" key="3"/>
<evidence type="ECO:0007829" key="4">
    <source>
        <dbReference type="PDB" id="7DRJ"/>
    </source>
</evidence>
<evidence type="ECO:0007829" key="5">
    <source>
        <dbReference type="PDB" id="7DRK"/>
    </source>
</evidence>
<organism>
    <name type="scientific">Staphylococcus aureus (strain N315)</name>
    <dbReference type="NCBI Taxonomy" id="158879"/>
    <lineage>
        <taxon>Bacteria</taxon>
        <taxon>Bacillati</taxon>
        <taxon>Bacillota</taxon>
        <taxon>Bacilli</taxon>
        <taxon>Bacillales</taxon>
        <taxon>Staphylococcaceae</taxon>
        <taxon>Staphylococcus</taxon>
    </lineage>
</organism>